<keyword id="KW-0456">Lyase</keyword>
<keyword id="KW-0489">Methyltransferase</keyword>
<keyword id="KW-0511">Multifunctional enzyme</keyword>
<keyword id="KW-0627">Porphyrin biosynthesis</keyword>
<keyword id="KW-0949">S-adenosyl-L-methionine</keyword>
<keyword id="KW-0808">Transferase</keyword>
<reference key="1">
    <citation type="journal article" date="1995" name="J. Bacteriol.">
        <title>Cloning and sequencing of some genes responsible for porphyrin biosynthesis from the anaerobic bacterium Clostridium josui.</title>
        <authorList>
            <person name="Fujino E."/>
            <person name="Fujino T."/>
            <person name="Karita S."/>
            <person name="Sakka K."/>
            <person name="Ohmiya K."/>
        </authorList>
    </citation>
    <scope>NUCLEOTIDE SEQUENCE [GENOMIC DNA]</scope>
    <scope>FUNCTION</scope>
    <source>
        <strain>DSM 25723 / FERM P-9684 / JCM 17888 / KCTC 15379 / III</strain>
    </source>
</reference>
<proteinExistence type="inferred from homology"/>
<name>HEM4_RUMJO</name>
<comment type="function">
    <text evidence="2">May catalyze sequential reactions to synthesize uroporphyrinogen III from hydroxymethylbilane (HMB) and then precorrin-2, which are intermediate compounds in both vitamin B12 and siroheme biosyntheses.</text>
</comment>
<comment type="catalytic activity">
    <reaction>
        <text>uroporphyrinogen III + 2 S-adenosyl-L-methionine = precorrin-2 + 2 S-adenosyl-L-homocysteine + H(+)</text>
        <dbReference type="Rhea" id="RHEA:32459"/>
        <dbReference type="ChEBI" id="CHEBI:15378"/>
        <dbReference type="ChEBI" id="CHEBI:57308"/>
        <dbReference type="ChEBI" id="CHEBI:57856"/>
        <dbReference type="ChEBI" id="CHEBI:58827"/>
        <dbReference type="ChEBI" id="CHEBI:59789"/>
        <dbReference type="EC" id="2.1.1.107"/>
    </reaction>
</comment>
<comment type="catalytic activity">
    <reaction>
        <text>hydroxymethylbilane = uroporphyrinogen III + H2O</text>
        <dbReference type="Rhea" id="RHEA:18965"/>
        <dbReference type="ChEBI" id="CHEBI:15377"/>
        <dbReference type="ChEBI" id="CHEBI:57308"/>
        <dbReference type="ChEBI" id="CHEBI:57845"/>
        <dbReference type="EC" id="4.2.1.75"/>
    </reaction>
</comment>
<comment type="pathway">
    <text>Cofactor biosynthesis; adenosylcobalamin biosynthesis; precorrin-2 from uroporphyrinogen III: step 1/1.</text>
</comment>
<comment type="pathway">
    <text>Porphyrin-containing compound metabolism; siroheme biosynthesis; precorrin-2 from uroporphyrinogen III: step 1/1.</text>
</comment>
<comment type="similarity">
    <text evidence="1">In the N-terminal section; belongs to the precorrin methyltransferase family.</text>
</comment>
<comment type="similarity">
    <text evidence="1">In the C-terminal section; belongs to the uroporphyrinogen-III synthase family.</text>
</comment>
<dbReference type="EC" id="2.1.1.107"/>
<dbReference type="EC" id="4.2.1.75"/>
<dbReference type="EMBL" id="D28503">
    <property type="protein sequence ID" value="BAA05862.1"/>
    <property type="molecule type" value="Genomic_DNA"/>
</dbReference>
<dbReference type="PIR" id="I40811">
    <property type="entry name" value="I40811"/>
</dbReference>
<dbReference type="SMR" id="Q59294"/>
<dbReference type="UniPathway" id="UPA00148">
    <property type="reaction ID" value="UER00211"/>
</dbReference>
<dbReference type="UniPathway" id="UPA00262">
    <property type="reaction ID" value="UER00211"/>
</dbReference>
<dbReference type="GO" id="GO:0004851">
    <property type="term" value="F:uroporphyrin-III C-methyltransferase activity"/>
    <property type="evidence" value="ECO:0007669"/>
    <property type="project" value="UniProtKB-EC"/>
</dbReference>
<dbReference type="GO" id="GO:0004852">
    <property type="term" value="F:uroporphyrinogen-III synthase activity"/>
    <property type="evidence" value="ECO:0007669"/>
    <property type="project" value="UniProtKB-EC"/>
</dbReference>
<dbReference type="GO" id="GO:0009236">
    <property type="term" value="P:cobalamin biosynthetic process"/>
    <property type="evidence" value="ECO:0007669"/>
    <property type="project" value="UniProtKB-UniPathway"/>
</dbReference>
<dbReference type="GO" id="GO:0032259">
    <property type="term" value="P:methylation"/>
    <property type="evidence" value="ECO:0007669"/>
    <property type="project" value="UniProtKB-KW"/>
</dbReference>
<dbReference type="GO" id="GO:0019354">
    <property type="term" value="P:siroheme biosynthetic process"/>
    <property type="evidence" value="ECO:0007669"/>
    <property type="project" value="UniProtKB-UniPathway"/>
</dbReference>
<dbReference type="CDD" id="cd06578">
    <property type="entry name" value="HemD"/>
    <property type="match status" value="1"/>
</dbReference>
<dbReference type="CDD" id="cd11642">
    <property type="entry name" value="SUMT"/>
    <property type="match status" value="1"/>
</dbReference>
<dbReference type="FunFam" id="3.30.950.10:FF:000001">
    <property type="entry name" value="Siroheme synthase"/>
    <property type="match status" value="1"/>
</dbReference>
<dbReference type="FunFam" id="3.40.1010.10:FF:000001">
    <property type="entry name" value="Siroheme synthase"/>
    <property type="match status" value="1"/>
</dbReference>
<dbReference type="Gene3D" id="3.40.50.10090">
    <property type="match status" value="2"/>
</dbReference>
<dbReference type="Gene3D" id="3.40.1010.10">
    <property type="entry name" value="Cobalt-precorrin-4 Transmethylase, Domain 1"/>
    <property type="match status" value="1"/>
</dbReference>
<dbReference type="Gene3D" id="3.30.950.10">
    <property type="entry name" value="Methyltransferase, Cobalt-precorrin-4 Transmethylase, Domain 2"/>
    <property type="match status" value="1"/>
</dbReference>
<dbReference type="InterPro" id="IPR000878">
    <property type="entry name" value="4pyrrol_Mease"/>
</dbReference>
<dbReference type="InterPro" id="IPR035996">
    <property type="entry name" value="4pyrrol_Methylase_sf"/>
</dbReference>
<dbReference type="InterPro" id="IPR036108">
    <property type="entry name" value="4pyrrol_syn_uPrphyn_synt_sf"/>
</dbReference>
<dbReference type="InterPro" id="IPR003754">
    <property type="entry name" value="4pyrrol_synth_uPrphyn_synth"/>
</dbReference>
<dbReference type="InterPro" id="IPR014777">
    <property type="entry name" value="4pyrrole_Mease_sub1"/>
</dbReference>
<dbReference type="InterPro" id="IPR014776">
    <property type="entry name" value="4pyrrole_Mease_sub2"/>
</dbReference>
<dbReference type="InterPro" id="IPR006366">
    <property type="entry name" value="CobA/CysG_C"/>
</dbReference>
<dbReference type="InterPro" id="IPR050161">
    <property type="entry name" value="Siro_Cobalamin_biosynth"/>
</dbReference>
<dbReference type="InterPro" id="IPR003043">
    <property type="entry name" value="Uropor_MeTrfase_CS"/>
</dbReference>
<dbReference type="NCBIfam" id="TIGR01469">
    <property type="entry name" value="cobA_cysG_Cterm"/>
    <property type="match status" value="1"/>
</dbReference>
<dbReference type="NCBIfam" id="NF004790">
    <property type="entry name" value="PRK06136.1"/>
    <property type="match status" value="1"/>
</dbReference>
<dbReference type="PANTHER" id="PTHR45790:SF3">
    <property type="entry name" value="S-ADENOSYL-L-METHIONINE-DEPENDENT UROPORPHYRINOGEN III METHYLTRANSFERASE, CHLOROPLASTIC"/>
    <property type="match status" value="1"/>
</dbReference>
<dbReference type="PANTHER" id="PTHR45790">
    <property type="entry name" value="SIROHEME SYNTHASE-RELATED"/>
    <property type="match status" value="1"/>
</dbReference>
<dbReference type="Pfam" id="PF02602">
    <property type="entry name" value="HEM4"/>
    <property type="match status" value="1"/>
</dbReference>
<dbReference type="Pfam" id="PF00590">
    <property type="entry name" value="TP_methylase"/>
    <property type="match status" value="1"/>
</dbReference>
<dbReference type="SUPFAM" id="SSF69618">
    <property type="entry name" value="HemD-like"/>
    <property type="match status" value="1"/>
</dbReference>
<dbReference type="SUPFAM" id="SSF53790">
    <property type="entry name" value="Tetrapyrrole methylase"/>
    <property type="match status" value="1"/>
</dbReference>
<dbReference type="PROSITE" id="PS00839">
    <property type="entry name" value="SUMT_1"/>
    <property type="match status" value="1"/>
</dbReference>
<dbReference type="PROSITE" id="PS00840">
    <property type="entry name" value="SUMT_2"/>
    <property type="match status" value="1"/>
</dbReference>
<organism>
    <name type="scientific">Ruminiclostridium josui</name>
    <name type="common">Clostridium josui</name>
    <dbReference type="NCBI Taxonomy" id="1499"/>
    <lineage>
        <taxon>Bacteria</taxon>
        <taxon>Bacillati</taxon>
        <taxon>Bacillota</taxon>
        <taxon>Clostridia</taxon>
        <taxon>Eubacteriales</taxon>
        <taxon>Oscillospiraceae</taxon>
        <taxon>Ruminiclostridium</taxon>
    </lineage>
</organism>
<sequence>MEHGFVALVGAGPGDKGLITIRGAELLSQADVVVYDRLVSQEIIKMIPTTAEKIDVGKENKFHPVKQEEINHILLEKSLEGKKVIRLKGGDPFVFGRGGEELELLYENNIPFEVVPGVTSAVAALCYGGIPATHRDFCSSLHIITGHAREGGQLSIPFHELKELNGTIVFLMGDSSLSYLMNGLINAGMEKDMPAAIVENGTRPNQRKLVATVGTLEQKALEMEIKSPAIIAVGKVCSLSEKFSWFMKKPLFGTKILVTRPKESSGTLVEKLRQLGAEPVEYPCIEVVPIPQNEKLYHACENIREYGWILLTSKNGIQIFFDYLNSKGLDARVLANTKIGTVGSQTAKALKEVGLISDFTPEIFDGRHLALGIAERVGENEKVLICDAAIASDDIVNILRSNNIKFDRVPLYNTNYINENSNKVKKSIVHGELKYITFTSASTVEGFIASMKDIPLESLTAVCIGNKTAEAAKKYNLRYVVAEKSTIDSMIDKLLEIGGGNIYD</sequence>
<evidence type="ECO:0000305" key="1"/>
<evidence type="ECO:0000305" key="2">
    <source>
    </source>
</evidence>
<protein>
    <recommendedName>
        <fullName>Porphyrin biosynthesis protein HemD</fullName>
    </recommendedName>
    <domain>
        <recommendedName>
            <fullName>Uroporphyrinogen-III C-methyltransferase</fullName>
            <shortName>Urogen III methylase</shortName>
            <ecNumber>2.1.1.107</ecNumber>
        </recommendedName>
        <alternativeName>
            <fullName>SUMT</fullName>
        </alternativeName>
        <alternativeName>
            <fullName>Uroporphyrinogen III methylase</fullName>
            <shortName>UROM</shortName>
        </alternativeName>
    </domain>
    <domain>
        <recommendedName>
            <fullName>Uroporphyrinogen-III synthase</fullName>
            <shortName>UROS</shortName>
            <ecNumber>4.2.1.75</ecNumber>
        </recommendedName>
        <alternativeName>
            <fullName>Hydroxymethylbilane hydrolyase [cyclizing]</fullName>
        </alternativeName>
        <alternativeName>
            <fullName>Uroporphyrinogen-III cosynthase</fullName>
        </alternativeName>
    </domain>
</protein>
<accession>Q59294</accession>
<gene>
    <name type="primary">hemD</name>
</gene>
<feature type="chain" id="PRO_0000150383" description="Porphyrin biosynthesis protein HemD">
    <location>
        <begin position="1"/>
        <end position="504"/>
    </location>
</feature>
<feature type="region of interest" description="Uroporphyrinogen-III C-methyltransferase">
    <location>
        <begin position="1"/>
        <end position="248"/>
    </location>
</feature>
<feature type="region of interest" description="Uroporphyrinogen-III synthase">
    <location>
        <begin position="249"/>
        <end position="504"/>
    </location>
</feature>